<organism>
    <name type="scientific">Yersinia enterocolitica serotype O:8 / biotype 1B (strain NCTC 13174 / 8081)</name>
    <dbReference type="NCBI Taxonomy" id="393305"/>
    <lineage>
        <taxon>Bacteria</taxon>
        <taxon>Pseudomonadati</taxon>
        <taxon>Pseudomonadota</taxon>
        <taxon>Gammaproteobacteria</taxon>
        <taxon>Enterobacterales</taxon>
        <taxon>Yersiniaceae</taxon>
        <taxon>Yersinia</taxon>
    </lineage>
</organism>
<dbReference type="EC" id="2.1.1.-" evidence="1"/>
<dbReference type="EC" id="2.1.1.35" evidence="1"/>
<dbReference type="EMBL" id="AM286415">
    <property type="protein sequence ID" value="CAL10278.1"/>
    <property type="molecule type" value="Genomic_DNA"/>
</dbReference>
<dbReference type="RefSeq" id="WP_011815315.1">
    <property type="nucleotide sequence ID" value="NC_008800.1"/>
</dbReference>
<dbReference type="RefSeq" id="YP_001004530.1">
    <property type="nucleotide sequence ID" value="NC_008800.1"/>
</dbReference>
<dbReference type="SMR" id="A1JI40"/>
<dbReference type="KEGG" id="yen:YE0138"/>
<dbReference type="PATRIC" id="fig|393305.7.peg.228"/>
<dbReference type="eggNOG" id="COG2265">
    <property type="taxonomic scope" value="Bacteria"/>
</dbReference>
<dbReference type="HOGENOM" id="CLU_043022_0_0_6"/>
<dbReference type="OrthoDB" id="9804590at2"/>
<dbReference type="Proteomes" id="UP000000642">
    <property type="component" value="Chromosome"/>
</dbReference>
<dbReference type="GO" id="GO:0005829">
    <property type="term" value="C:cytosol"/>
    <property type="evidence" value="ECO:0007669"/>
    <property type="project" value="TreeGrafter"/>
</dbReference>
<dbReference type="GO" id="GO:0019843">
    <property type="term" value="F:rRNA binding"/>
    <property type="evidence" value="ECO:0007669"/>
    <property type="project" value="TreeGrafter"/>
</dbReference>
<dbReference type="GO" id="GO:0030697">
    <property type="term" value="F:tRNA (uracil(54)-C5)-methyltransferase activity, S-adenosyl methionine-dependent"/>
    <property type="evidence" value="ECO:0007669"/>
    <property type="project" value="UniProtKB-UniRule"/>
</dbReference>
<dbReference type="GO" id="GO:0000049">
    <property type="term" value="F:tRNA binding"/>
    <property type="evidence" value="ECO:0007669"/>
    <property type="project" value="TreeGrafter"/>
</dbReference>
<dbReference type="GO" id="GO:0030488">
    <property type="term" value="P:tRNA methylation"/>
    <property type="evidence" value="ECO:0007669"/>
    <property type="project" value="UniProtKB-UniRule"/>
</dbReference>
<dbReference type="CDD" id="cd02440">
    <property type="entry name" value="AdoMet_MTases"/>
    <property type="match status" value="1"/>
</dbReference>
<dbReference type="FunFam" id="2.40.50.1070:FF:000001">
    <property type="entry name" value="tRNA/tmRNA (uracil-C(5))-methyltransferase"/>
    <property type="match status" value="1"/>
</dbReference>
<dbReference type="FunFam" id="3.40.50.150:FF:000012">
    <property type="entry name" value="tRNA/tmRNA (uracil-C(5))-methyltransferase"/>
    <property type="match status" value="1"/>
</dbReference>
<dbReference type="Gene3D" id="2.40.50.1070">
    <property type="match status" value="1"/>
</dbReference>
<dbReference type="Gene3D" id="3.40.50.150">
    <property type="entry name" value="Vaccinia Virus protein VP39"/>
    <property type="match status" value="1"/>
</dbReference>
<dbReference type="HAMAP" id="MF_01011">
    <property type="entry name" value="RNA_methyltr_TrmA"/>
    <property type="match status" value="1"/>
</dbReference>
<dbReference type="InterPro" id="IPR030390">
    <property type="entry name" value="MeTrfase_TrmA_AS"/>
</dbReference>
<dbReference type="InterPro" id="IPR030391">
    <property type="entry name" value="MeTrfase_TrmA_CS"/>
</dbReference>
<dbReference type="InterPro" id="IPR029063">
    <property type="entry name" value="SAM-dependent_MTases_sf"/>
</dbReference>
<dbReference type="InterPro" id="IPR011869">
    <property type="entry name" value="TrmA_MeTrfase"/>
</dbReference>
<dbReference type="InterPro" id="IPR010280">
    <property type="entry name" value="U5_MeTrfase_fam"/>
</dbReference>
<dbReference type="NCBIfam" id="TIGR02143">
    <property type="entry name" value="trmA_only"/>
    <property type="match status" value="1"/>
</dbReference>
<dbReference type="PANTHER" id="PTHR47790">
    <property type="entry name" value="TRNA/TMRNA (URACIL-C(5))-METHYLTRANSFERASE"/>
    <property type="match status" value="1"/>
</dbReference>
<dbReference type="PANTHER" id="PTHR47790:SF2">
    <property type="entry name" value="TRNA_TMRNA (URACIL-C(5))-METHYLTRANSFERASE"/>
    <property type="match status" value="1"/>
</dbReference>
<dbReference type="Pfam" id="PF05958">
    <property type="entry name" value="tRNA_U5-meth_tr"/>
    <property type="match status" value="1"/>
</dbReference>
<dbReference type="SUPFAM" id="SSF53335">
    <property type="entry name" value="S-adenosyl-L-methionine-dependent methyltransferases"/>
    <property type="match status" value="1"/>
</dbReference>
<dbReference type="PROSITE" id="PS51687">
    <property type="entry name" value="SAM_MT_RNA_M5U"/>
    <property type="match status" value="1"/>
</dbReference>
<dbReference type="PROSITE" id="PS01230">
    <property type="entry name" value="TRMA_1"/>
    <property type="match status" value="1"/>
</dbReference>
<dbReference type="PROSITE" id="PS01231">
    <property type="entry name" value="TRMA_2"/>
    <property type="match status" value="1"/>
</dbReference>
<proteinExistence type="inferred from homology"/>
<reference key="1">
    <citation type="journal article" date="2006" name="PLoS Genet.">
        <title>The complete genome sequence and comparative genome analysis of the high pathogenicity Yersinia enterocolitica strain 8081.</title>
        <authorList>
            <person name="Thomson N.R."/>
            <person name="Howard S."/>
            <person name="Wren B.W."/>
            <person name="Holden M.T.G."/>
            <person name="Crossman L."/>
            <person name="Challis G.L."/>
            <person name="Churcher C."/>
            <person name="Mungall K."/>
            <person name="Brooks K."/>
            <person name="Chillingworth T."/>
            <person name="Feltwell T."/>
            <person name="Abdellah Z."/>
            <person name="Hauser H."/>
            <person name="Jagels K."/>
            <person name="Maddison M."/>
            <person name="Moule S."/>
            <person name="Sanders M."/>
            <person name="Whitehead S."/>
            <person name="Quail M.A."/>
            <person name="Dougan G."/>
            <person name="Parkhill J."/>
            <person name="Prentice M.B."/>
        </authorList>
    </citation>
    <scope>NUCLEOTIDE SEQUENCE [LARGE SCALE GENOMIC DNA]</scope>
    <source>
        <strain>NCTC 13174 / 8081</strain>
    </source>
</reference>
<protein>
    <recommendedName>
        <fullName evidence="1">tRNA/tmRNA (uracil-C(5))-methyltransferase</fullName>
        <ecNumber evidence="1">2.1.1.-</ecNumber>
        <ecNumber evidence="1">2.1.1.35</ecNumber>
    </recommendedName>
    <alternativeName>
        <fullName evidence="1">tRNA (uracil(54)-C(5))-methyltransferase</fullName>
    </alternativeName>
    <alternativeName>
        <fullName evidence="1">tRNA(m5U54)-methyltransferase</fullName>
        <shortName evidence="1">RUMT</shortName>
    </alternativeName>
    <alternativeName>
        <fullName evidence="1">tmRNA (uracil(341)-C(5))-methyltransferase</fullName>
    </alternativeName>
</protein>
<sequence>MTPDILPTDGYEHQLAEKSARLQAMMSPFQAPAAEIFRSPAEHYRMRAEFRVWHDEDDLYHIMFDQQTKLRIRVEQFPVASLLINRLMSALMTAIRAEPILRHKLFQIDYLSTLSGKLLATLLYHRPLDEEWQQKARELRDQLREQGFDLQLIGRASKTKIMLDHDYIDEVLPVAGRDMIYRQVENSFTQPNAAVNIHMLEWAIDVTQHASGDLLELYCGNGNFSLALARNFDRVLATEIAKPSVAAAQYNIAANHIDNVQIIRMSAEEFTQAMQGVREFNRLKGIDLTSYNCETIFVDPPRSGLDDETVKLVQAYPRILYISCNPETLCANLEQLQYTHKISRLALFDQFPYTHHMECGVLLEKRD</sequence>
<keyword id="KW-0489">Methyltransferase</keyword>
<keyword id="KW-0949">S-adenosyl-L-methionine</keyword>
<keyword id="KW-0808">Transferase</keyword>
<keyword id="KW-0819">tRNA processing</keyword>
<gene>
    <name evidence="1" type="primary">trmA</name>
    <name type="ordered locus">YE0138</name>
</gene>
<evidence type="ECO:0000255" key="1">
    <source>
        <dbReference type="HAMAP-Rule" id="MF_01011"/>
    </source>
</evidence>
<comment type="function">
    <text evidence="1">Dual-specificity methyltransferase that catalyzes the formation of 5-methyluridine at position 54 (m5U54) in all tRNAs, and that of position 341 (m5U341) in tmRNA (transfer-mRNA).</text>
</comment>
<comment type="catalytic activity">
    <reaction evidence="1">
        <text>uridine(54) in tRNA + S-adenosyl-L-methionine = 5-methyluridine(54) in tRNA + S-adenosyl-L-homocysteine + H(+)</text>
        <dbReference type="Rhea" id="RHEA:42712"/>
        <dbReference type="Rhea" id="RHEA-COMP:10167"/>
        <dbReference type="Rhea" id="RHEA-COMP:10193"/>
        <dbReference type="ChEBI" id="CHEBI:15378"/>
        <dbReference type="ChEBI" id="CHEBI:57856"/>
        <dbReference type="ChEBI" id="CHEBI:59789"/>
        <dbReference type="ChEBI" id="CHEBI:65315"/>
        <dbReference type="ChEBI" id="CHEBI:74447"/>
        <dbReference type="EC" id="2.1.1.35"/>
    </reaction>
</comment>
<comment type="catalytic activity">
    <reaction evidence="1">
        <text>uridine(341) in tmRNA + S-adenosyl-L-methionine = 5-methyluridine(341) in tmRNA + S-adenosyl-L-homocysteine + H(+)</text>
        <dbReference type="Rhea" id="RHEA:43612"/>
        <dbReference type="Rhea" id="RHEA-COMP:10630"/>
        <dbReference type="Rhea" id="RHEA-COMP:10631"/>
        <dbReference type="ChEBI" id="CHEBI:15378"/>
        <dbReference type="ChEBI" id="CHEBI:57856"/>
        <dbReference type="ChEBI" id="CHEBI:59789"/>
        <dbReference type="ChEBI" id="CHEBI:65315"/>
        <dbReference type="ChEBI" id="CHEBI:74447"/>
    </reaction>
</comment>
<comment type="similarity">
    <text evidence="1">Belongs to the class I-like SAM-binding methyltransferase superfamily. RNA M5U methyltransferase family. TrmA subfamily.</text>
</comment>
<accession>A1JI40</accession>
<feature type="chain" id="PRO_0000388568" description="tRNA/tmRNA (uracil-C(5))-methyltransferase">
    <location>
        <begin position="1"/>
        <end position="367"/>
    </location>
</feature>
<feature type="active site" description="Nucleophile" evidence="1">
    <location>
        <position position="324"/>
    </location>
</feature>
<feature type="active site" description="Proton acceptor" evidence="1">
    <location>
        <position position="358"/>
    </location>
</feature>
<feature type="binding site" evidence="1">
    <location>
        <position position="190"/>
    </location>
    <ligand>
        <name>S-adenosyl-L-methionine</name>
        <dbReference type="ChEBI" id="CHEBI:59789"/>
    </ligand>
</feature>
<feature type="binding site" evidence="1">
    <location>
        <position position="218"/>
    </location>
    <ligand>
        <name>S-adenosyl-L-methionine</name>
        <dbReference type="ChEBI" id="CHEBI:59789"/>
    </ligand>
</feature>
<feature type="binding site" evidence="1">
    <location>
        <position position="223"/>
    </location>
    <ligand>
        <name>S-adenosyl-L-methionine</name>
        <dbReference type="ChEBI" id="CHEBI:59789"/>
    </ligand>
</feature>
<feature type="binding site" evidence="1">
    <location>
        <position position="239"/>
    </location>
    <ligand>
        <name>S-adenosyl-L-methionine</name>
        <dbReference type="ChEBI" id="CHEBI:59789"/>
    </ligand>
</feature>
<feature type="binding site" evidence="1">
    <location>
        <position position="299"/>
    </location>
    <ligand>
        <name>S-adenosyl-L-methionine</name>
        <dbReference type="ChEBI" id="CHEBI:59789"/>
    </ligand>
</feature>
<name>TRMA_YERE8</name>